<protein>
    <recommendedName>
        <fullName>Probable cysteine desulfurase</fullName>
        <ecNumber>2.8.1.7</ecNumber>
    </recommendedName>
</protein>
<name>CSD_MYCPN</name>
<feature type="chain" id="PRO_0000150300" description="Probable cysteine desulfurase">
    <location>
        <begin position="1"/>
        <end position="408"/>
    </location>
</feature>
<feature type="modified residue" description="N6-(pyridoxal phosphate)lysine" evidence="1">
    <location>
        <position position="225"/>
    </location>
</feature>
<gene>
    <name type="primary">csd</name>
    <name type="ordered locus">MPN_487</name>
    <name type="ORF">MP355</name>
</gene>
<dbReference type="EC" id="2.8.1.7"/>
<dbReference type="EMBL" id="U00089">
    <property type="protein sequence ID" value="AAB96003.1"/>
    <property type="molecule type" value="Genomic_DNA"/>
</dbReference>
<dbReference type="PIR" id="S73681">
    <property type="entry name" value="S73681"/>
</dbReference>
<dbReference type="RefSeq" id="NP_110175.1">
    <property type="nucleotide sequence ID" value="NC_000912.1"/>
</dbReference>
<dbReference type="RefSeq" id="WP_010874843.1">
    <property type="nucleotide sequence ID" value="NZ_OU342337.1"/>
</dbReference>
<dbReference type="SMR" id="P75298"/>
<dbReference type="IntAct" id="P75298">
    <property type="interactions" value="2"/>
</dbReference>
<dbReference type="STRING" id="272634.MPN_487"/>
<dbReference type="EnsemblBacteria" id="AAB96003">
    <property type="protein sequence ID" value="AAB96003"/>
    <property type="gene ID" value="MPN_487"/>
</dbReference>
<dbReference type="KEGG" id="mpn:MPN_487"/>
<dbReference type="PATRIC" id="fig|272634.6.peg.526"/>
<dbReference type="HOGENOM" id="CLU_003433_2_5_14"/>
<dbReference type="OrthoDB" id="9804366at2"/>
<dbReference type="BioCyc" id="MPNE272634:G1GJ3-795-MONOMER"/>
<dbReference type="Proteomes" id="UP000000808">
    <property type="component" value="Chromosome"/>
</dbReference>
<dbReference type="GO" id="GO:0031071">
    <property type="term" value="F:cysteine desulfurase activity"/>
    <property type="evidence" value="ECO:0007669"/>
    <property type="project" value="UniProtKB-EC"/>
</dbReference>
<dbReference type="Gene3D" id="3.90.1150.10">
    <property type="entry name" value="Aspartate Aminotransferase, domain 1"/>
    <property type="match status" value="1"/>
</dbReference>
<dbReference type="Gene3D" id="3.40.640.10">
    <property type="entry name" value="Type I PLP-dependent aspartate aminotransferase-like (Major domain)"/>
    <property type="match status" value="1"/>
</dbReference>
<dbReference type="InterPro" id="IPR000192">
    <property type="entry name" value="Aminotrans_V_dom"/>
</dbReference>
<dbReference type="InterPro" id="IPR020578">
    <property type="entry name" value="Aminotrans_V_PyrdxlP_BS"/>
</dbReference>
<dbReference type="InterPro" id="IPR015424">
    <property type="entry name" value="PyrdxlP-dep_Trfase"/>
</dbReference>
<dbReference type="InterPro" id="IPR015421">
    <property type="entry name" value="PyrdxlP-dep_Trfase_major"/>
</dbReference>
<dbReference type="InterPro" id="IPR015422">
    <property type="entry name" value="PyrdxlP-dep_Trfase_small"/>
</dbReference>
<dbReference type="PANTHER" id="PTHR43586">
    <property type="entry name" value="CYSTEINE DESULFURASE"/>
    <property type="match status" value="1"/>
</dbReference>
<dbReference type="PANTHER" id="PTHR43586:SF8">
    <property type="entry name" value="CYSTEINE DESULFURASE 1, CHLOROPLASTIC"/>
    <property type="match status" value="1"/>
</dbReference>
<dbReference type="Pfam" id="PF00266">
    <property type="entry name" value="Aminotran_5"/>
    <property type="match status" value="1"/>
</dbReference>
<dbReference type="SUPFAM" id="SSF53383">
    <property type="entry name" value="PLP-dependent transferases"/>
    <property type="match status" value="1"/>
</dbReference>
<dbReference type="PROSITE" id="PS00595">
    <property type="entry name" value="AA_TRANSFER_CLASS_5"/>
    <property type="match status" value="1"/>
</dbReference>
<reference key="1">
    <citation type="journal article" date="1996" name="Nucleic Acids Res.">
        <title>Complete sequence analysis of the genome of the bacterium Mycoplasma pneumoniae.</title>
        <authorList>
            <person name="Himmelreich R."/>
            <person name="Hilbert H."/>
            <person name="Plagens H."/>
            <person name="Pirkl E."/>
            <person name="Li B.-C."/>
            <person name="Herrmann R."/>
        </authorList>
    </citation>
    <scope>NUCLEOTIDE SEQUENCE [LARGE SCALE GENOMIC DNA]</scope>
    <source>
        <strain>ATCC 29342 / M129 / Subtype 1</strain>
    </source>
</reference>
<sequence length="408" mass="46483">MTKTKFNPYQFRKQFKWFKNNPQWVNFDNAATSIALDTVSQACKEYYELFSVNPHNKTPDLNNQIIAIIAETRQLVADWFNVTALEIIFTSSATESINLFAHGLKPWIKPGDEIVLKGDEHSANVLPWVALAKQTKARLVWVEKQANQSLEDTFKSLINPKTKVVAITATSNLFGNSIDFAQIADYLKQVNPKAFVAVDAVQTVQHKQIDIAKTQIDFLAFSTHKFYGPTGLGVAYIKKSLQPQLQPLKLGGDIFTQIDPDNTIHFKSTPLKFEAGTPNIMAIYALNKLLRFFKQKFNFAQMMAYGHQLKQQAYELLNSNPQIVLANHDQDVPIFSFKHRQLATIDLATFLNINKIMVRQGSICVGRYRNKDYFVRVSLMHYNTVKELQYLAKLLATDTKTIIKNVIK</sequence>
<organism>
    <name type="scientific">Mycoplasma pneumoniae (strain ATCC 29342 / M129 / Subtype 1)</name>
    <name type="common">Mycoplasmoides pneumoniae</name>
    <dbReference type="NCBI Taxonomy" id="272634"/>
    <lineage>
        <taxon>Bacteria</taxon>
        <taxon>Bacillati</taxon>
        <taxon>Mycoplasmatota</taxon>
        <taxon>Mycoplasmoidales</taxon>
        <taxon>Mycoplasmoidaceae</taxon>
        <taxon>Mycoplasmoides</taxon>
    </lineage>
</organism>
<evidence type="ECO:0000250" key="1"/>
<evidence type="ECO:0000305" key="2"/>
<proteinExistence type="inferred from homology"/>
<accession>P75298</accession>
<comment type="function">
    <text evidence="1">Catalyzes the removal of elemental sulfur and selenium atoms from L-cysteine, L-cystine, L-selenocysteine, and L-selenocystine to produce L-alanine.</text>
</comment>
<comment type="catalytic activity">
    <reaction>
        <text>(sulfur carrier)-H + L-cysteine = (sulfur carrier)-SH + L-alanine</text>
        <dbReference type="Rhea" id="RHEA:43892"/>
        <dbReference type="Rhea" id="RHEA-COMP:14737"/>
        <dbReference type="Rhea" id="RHEA-COMP:14739"/>
        <dbReference type="ChEBI" id="CHEBI:29917"/>
        <dbReference type="ChEBI" id="CHEBI:35235"/>
        <dbReference type="ChEBI" id="CHEBI:57972"/>
        <dbReference type="ChEBI" id="CHEBI:64428"/>
        <dbReference type="EC" id="2.8.1.7"/>
    </reaction>
</comment>
<comment type="cofactor">
    <cofactor evidence="1">
        <name>pyridoxal 5'-phosphate</name>
        <dbReference type="ChEBI" id="CHEBI:597326"/>
    </cofactor>
</comment>
<comment type="similarity">
    <text evidence="2">Belongs to the class-V pyridoxal-phosphate-dependent aminotransferase family. Csd subfamily.</text>
</comment>
<keyword id="KW-0663">Pyridoxal phosphate</keyword>
<keyword id="KW-1185">Reference proteome</keyword>
<keyword id="KW-0808">Transferase</keyword>